<gene>
    <name evidence="1" type="primary">pxpA</name>
    <name type="ordered locus">SAS1541</name>
</gene>
<proteinExistence type="inferred from homology"/>
<dbReference type="EC" id="3.5.2.9" evidence="1"/>
<dbReference type="EMBL" id="BX571857">
    <property type="protein sequence ID" value="CAG43342.1"/>
    <property type="molecule type" value="Genomic_DNA"/>
</dbReference>
<dbReference type="RefSeq" id="WP_001261797.1">
    <property type="nucleotide sequence ID" value="NC_002953.3"/>
</dbReference>
<dbReference type="SMR" id="Q6G8W4"/>
<dbReference type="KEGG" id="sas:SAS1541"/>
<dbReference type="HOGENOM" id="CLU_069535_0_0_9"/>
<dbReference type="GO" id="GO:0017168">
    <property type="term" value="F:5-oxoprolinase (ATP-hydrolyzing) activity"/>
    <property type="evidence" value="ECO:0007669"/>
    <property type="project" value="UniProtKB-UniRule"/>
</dbReference>
<dbReference type="GO" id="GO:0005524">
    <property type="term" value="F:ATP binding"/>
    <property type="evidence" value="ECO:0007669"/>
    <property type="project" value="UniProtKB-UniRule"/>
</dbReference>
<dbReference type="GO" id="GO:0005975">
    <property type="term" value="P:carbohydrate metabolic process"/>
    <property type="evidence" value="ECO:0007669"/>
    <property type="project" value="InterPro"/>
</dbReference>
<dbReference type="CDD" id="cd10787">
    <property type="entry name" value="LamB_YcsF_like"/>
    <property type="match status" value="1"/>
</dbReference>
<dbReference type="Gene3D" id="3.20.20.370">
    <property type="entry name" value="Glycoside hydrolase/deacetylase"/>
    <property type="match status" value="1"/>
</dbReference>
<dbReference type="HAMAP" id="MF_00691">
    <property type="entry name" value="PxpA"/>
    <property type="match status" value="1"/>
</dbReference>
<dbReference type="InterPro" id="IPR011330">
    <property type="entry name" value="Glyco_hydro/deAcase_b/a-brl"/>
</dbReference>
<dbReference type="InterPro" id="IPR005501">
    <property type="entry name" value="LamB/YcsF/PxpA-like"/>
</dbReference>
<dbReference type="NCBIfam" id="NF003813">
    <property type="entry name" value="PRK05406.1-2"/>
    <property type="match status" value="1"/>
</dbReference>
<dbReference type="NCBIfam" id="NF003814">
    <property type="entry name" value="PRK05406.1-3"/>
    <property type="match status" value="1"/>
</dbReference>
<dbReference type="NCBIfam" id="NF003816">
    <property type="entry name" value="PRK05406.1-5"/>
    <property type="match status" value="1"/>
</dbReference>
<dbReference type="PANTHER" id="PTHR30292:SF0">
    <property type="entry name" value="5-OXOPROLINASE SUBUNIT A"/>
    <property type="match status" value="1"/>
</dbReference>
<dbReference type="PANTHER" id="PTHR30292">
    <property type="entry name" value="UNCHARACTERIZED PROTEIN YBGL-RELATED"/>
    <property type="match status" value="1"/>
</dbReference>
<dbReference type="Pfam" id="PF03746">
    <property type="entry name" value="LamB_YcsF"/>
    <property type="match status" value="1"/>
</dbReference>
<dbReference type="SUPFAM" id="SSF88713">
    <property type="entry name" value="Glycoside hydrolase/deacetylase"/>
    <property type="match status" value="1"/>
</dbReference>
<evidence type="ECO:0000255" key="1">
    <source>
        <dbReference type="HAMAP-Rule" id="MF_00691"/>
    </source>
</evidence>
<keyword id="KW-0067">ATP-binding</keyword>
<keyword id="KW-0378">Hydrolase</keyword>
<keyword id="KW-0547">Nucleotide-binding</keyword>
<organism>
    <name type="scientific">Staphylococcus aureus (strain MSSA476)</name>
    <dbReference type="NCBI Taxonomy" id="282459"/>
    <lineage>
        <taxon>Bacteria</taxon>
        <taxon>Bacillati</taxon>
        <taxon>Bacillota</taxon>
        <taxon>Bacilli</taxon>
        <taxon>Bacillales</taxon>
        <taxon>Staphylococcaceae</taxon>
        <taxon>Staphylococcus</taxon>
    </lineage>
</organism>
<accession>Q6G8W4</accession>
<sequence>MRVDLNCDLGEAFGNYSFGGDHQIIPLITSANVACGFHAGDENVMNETVKLAKAHNVAVGAHPGLPDLKGFGRRNIDISNDEIYNLMIYQLGALQGFCRIHQVKINHVKPHGALYQMGAKDREIASVIAQAVYDFDPSLVLVGLANSYLISEAKNVGLITASEVFADRRYEDDGQLVSRKESDAVITDTDEALKQVLKMVKENKVISKNNKEVTLQADTICVHGDGEHALLFVSKIREILMKEGIDIQSL</sequence>
<name>PXPA_STAAS</name>
<reference key="1">
    <citation type="journal article" date="2004" name="Proc. Natl. Acad. Sci. U.S.A.">
        <title>Complete genomes of two clinical Staphylococcus aureus strains: evidence for the rapid evolution of virulence and drug resistance.</title>
        <authorList>
            <person name="Holden M.T.G."/>
            <person name="Feil E.J."/>
            <person name="Lindsay J.A."/>
            <person name="Peacock S.J."/>
            <person name="Day N.P.J."/>
            <person name="Enright M.C."/>
            <person name="Foster T.J."/>
            <person name="Moore C.E."/>
            <person name="Hurst L."/>
            <person name="Atkin R."/>
            <person name="Barron A."/>
            <person name="Bason N."/>
            <person name="Bentley S.D."/>
            <person name="Chillingworth C."/>
            <person name="Chillingworth T."/>
            <person name="Churcher C."/>
            <person name="Clark L."/>
            <person name="Corton C."/>
            <person name="Cronin A."/>
            <person name="Doggett J."/>
            <person name="Dowd L."/>
            <person name="Feltwell T."/>
            <person name="Hance Z."/>
            <person name="Harris B."/>
            <person name="Hauser H."/>
            <person name="Holroyd S."/>
            <person name="Jagels K."/>
            <person name="James K.D."/>
            <person name="Lennard N."/>
            <person name="Line A."/>
            <person name="Mayes R."/>
            <person name="Moule S."/>
            <person name="Mungall K."/>
            <person name="Ormond D."/>
            <person name="Quail M.A."/>
            <person name="Rabbinowitsch E."/>
            <person name="Rutherford K.M."/>
            <person name="Sanders M."/>
            <person name="Sharp S."/>
            <person name="Simmonds M."/>
            <person name="Stevens K."/>
            <person name="Whitehead S."/>
            <person name="Barrell B.G."/>
            <person name="Spratt B.G."/>
            <person name="Parkhill J."/>
        </authorList>
    </citation>
    <scope>NUCLEOTIDE SEQUENCE [LARGE SCALE GENOMIC DNA]</scope>
    <source>
        <strain>MSSA476</strain>
    </source>
</reference>
<comment type="function">
    <text evidence="1">Catalyzes the cleavage of 5-oxoproline to form L-glutamate coupled to the hydrolysis of ATP to ADP and inorganic phosphate.</text>
</comment>
<comment type="catalytic activity">
    <reaction evidence="1">
        <text>5-oxo-L-proline + ATP + 2 H2O = L-glutamate + ADP + phosphate + H(+)</text>
        <dbReference type="Rhea" id="RHEA:10348"/>
        <dbReference type="ChEBI" id="CHEBI:15377"/>
        <dbReference type="ChEBI" id="CHEBI:15378"/>
        <dbReference type="ChEBI" id="CHEBI:29985"/>
        <dbReference type="ChEBI" id="CHEBI:30616"/>
        <dbReference type="ChEBI" id="CHEBI:43474"/>
        <dbReference type="ChEBI" id="CHEBI:58402"/>
        <dbReference type="ChEBI" id="CHEBI:456216"/>
        <dbReference type="EC" id="3.5.2.9"/>
    </reaction>
</comment>
<comment type="subunit">
    <text evidence="1">Forms a complex composed of PxpA, PxpB and PxpC.</text>
</comment>
<comment type="similarity">
    <text evidence="1">Belongs to the LamB/PxpA family.</text>
</comment>
<protein>
    <recommendedName>
        <fullName evidence="1">5-oxoprolinase subunit A</fullName>
        <shortName evidence="1">5-OPase subunit A</shortName>
        <ecNumber evidence="1">3.5.2.9</ecNumber>
    </recommendedName>
    <alternativeName>
        <fullName evidence="1">5-oxoprolinase (ATP-hydrolyzing) subunit A</fullName>
    </alternativeName>
</protein>
<feature type="chain" id="PRO_0000185047" description="5-oxoprolinase subunit A">
    <location>
        <begin position="1"/>
        <end position="250"/>
    </location>
</feature>